<keyword id="KW-0997">Cell inner membrane</keyword>
<keyword id="KW-1003">Cell membrane</keyword>
<keyword id="KW-0444">Lipid biosynthesis</keyword>
<keyword id="KW-0443">Lipid metabolism</keyword>
<keyword id="KW-0472">Membrane</keyword>
<keyword id="KW-0594">Phospholipid biosynthesis</keyword>
<keyword id="KW-1208">Phospholipid metabolism</keyword>
<keyword id="KW-0808">Transferase</keyword>
<keyword id="KW-0812">Transmembrane</keyword>
<keyword id="KW-1133">Transmembrane helix</keyword>
<accession>B6EM14</accession>
<sequence length="193" mass="20605">MTPLALIMIIIAYLLGSISSAVLICRLRGLPDPRTSGSQNPGATNVFRLGGKGAAGLVLLCDILKGMLPVWGGYFLESNPLLLGIIAIAACLGHMYPLFFHFKGGKGVATALGALAPIGLDLTGLLFGTWVVIVLITGYSSLASMATALLAPLFTWLVKPQYTLPVAMLSCLIVLKHHENIRRFFAGKEKKIW</sequence>
<name>PLSY_ALISL</name>
<proteinExistence type="inferred from homology"/>
<comment type="function">
    <text evidence="1">Catalyzes the transfer of an acyl group from acyl-phosphate (acyl-PO(4)) to glycerol-3-phosphate (G3P) to form lysophosphatidic acid (LPA). This enzyme utilizes acyl-phosphate as fatty acyl donor, but not acyl-CoA or acyl-ACP.</text>
</comment>
<comment type="catalytic activity">
    <reaction evidence="1">
        <text>an acyl phosphate + sn-glycerol 3-phosphate = a 1-acyl-sn-glycero-3-phosphate + phosphate</text>
        <dbReference type="Rhea" id="RHEA:34075"/>
        <dbReference type="ChEBI" id="CHEBI:43474"/>
        <dbReference type="ChEBI" id="CHEBI:57597"/>
        <dbReference type="ChEBI" id="CHEBI:57970"/>
        <dbReference type="ChEBI" id="CHEBI:59918"/>
        <dbReference type="EC" id="2.3.1.275"/>
    </reaction>
</comment>
<comment type="pathway">
    <text evidence="1">Lipid metabolism; phospholipid metabolism.</text>
</comment>
<comment type="subunit">
    <text evidence="1">Probably interacts with PlsX.</text>
</comment>
<comment type="subcellular location">
    <subcellularLocation>
        <location evidence="1">Cell inner membrane</location>
        <topology evidence="1">Multi-pass membrane protein</topology>
    </subcellularLocation>
</comment>
<comment type="similarity">
    <text evidence="1">Belongs to the PlsY family.</text>
</comment>
<protein>
    <recommendedName>
        <fullName evidence="1">Glycerol-3-phosphate acyltransferase</fullName>
    </recommendedName>
    <alternativeName>
        <fullName evidence="1">Acyl-PO4 G3P acyltransferase</fullName>
    </alternativeName>
    <alternativeName>
        <fullName evidence="1">Acyl-phosphate--glycerol-3-phosphate acyltransferase</fullName>
    </alternativeName>
    <alternativeName>
        <fullName evidence="1">G3P acyltransferase</fullName>
        <shortName evidence="1">GPAT</shortName>
        <ecNumber evidence="1">2.3.1.275</ecNumber>
    </alternativeName>
    <alternativeName>
        <fullName evidence="1">Lysophosphatidic acid synthase</fullName>
        <shortName evidence="1">LPA synthase</shortName>
    </alternativeName>
</protein>
<feature type="chain" id="PRO_1000136061" description="Glycerol-3-phosphate acyltransferase">
    <location>
        <begin position="1"/>
        <end position="193"/>
    </location>
</feature>
<feature type="transmembrane region" description="Helical" evidence="1">
    <location>
        <begin position="4"/>
        <end position="24"/>
    </location>
</feature>
<feature type="transmembrane region" description="Helical" evidence="1">
    <location>
        <begin position="56"/>
        <end position="76"/>
    </location>
</feature>
<feature type="transmembrane region" description="Helical" evidence="1">
    <location>
        <begin position="80"/>
        <end position="100"/>
    </location>
</feature>
<feature type="transmembrane region" description="Helical" evidence="1">
    <location>
        <begin position="116"/>
        <end position="136"/>
    </location>
</feature>
<feature type="transmembrane region" description="Helical" evidence="1">
    <location>
        <begin position="152"/>
        <end position="174"/>
    </location>
</feature>
<gene>
    <name evidence="1" type="primary">plsY</name>
    <name type="ordered locus">VSAL_I2693</name>
</gene>
<organism>
    <name type="scientific">Aliivibrio salmonicida (strain LFI1238)</name>
    <name type="common">Vibrio salmonicida (strain LFI1238)</name>
    <dbReference type="NCBI Taxonomy" id="316275"/>
    <lineage>
        <taxon>Bacteria</taxon>
        <taxon>Pseudomonadati</taxon>
        <taxon>Pseudomonadota</taxon>
        <taxon>Gammaproteobacteria</taxon>
        <taxon>Vibrionales</taxon>
        <taxon>Vibrionaceae</taxon>
        <taxon>Aliivibrio</taxon>
    </lineage>
</organism>
<reference key="1">
    <citation type="journal article" date="2008" name="BMC Genomics">
        <title>The genome sequence of the fish pathogen Aliivibrio salmonicida strain LFI1238 shows extensive evidence of gene decay.</title>
        <authorList>
            <person name="Hjerde E."/>
            <person name="Lorentzen M.S."/>
            <person name="Holden M.T."/>
            <person name="Seeger K."/>
            <person name="Paulsen S."/>
            <person name="Bason N."/>
            <person name="Churcher C."/>
            <person name="Harris D."/>
            <person name="Norbertczak H."/>
            <person name="Quail M.A."/>
            <person name="Sanders S."/>
            <person name="Thurston S."/>
            <person name="Parkhill J."/>
            <person name="Willassen N.P."/>
            <person name="Thomson N.R."/>
        </authorList>
    </citation>
    <scope>NUCLEOTIDE SEQUENCE [LARGE SCALE GENOMIC DNA]</scope>
    <source>
        <strain>LFI1238</strain>
    </source>
</reference>
<evidence type="ECO:0000255" key="1">
    <source>
        <dbReference type="HAMAP-Rule" id="MF_01043"/>
    </source>
</evidence>
<dbReference type="EC" id="2.3.1.275" evidence="1"/>
<dbReference type="EMBL" id="FM178379">
    <property type="protein sequence ID" value="CAQ80377.1"/>
    <property type="molecule type" value="Genomic_DNA"/>
</dbReference>
<dbReference type="RefSeq" id="WP_012551145.1">
    <property type="nucleotide sequence ID" value="NC_011312.1"/>
</dbReference>
<dbReference type="SMR" id="B6EM14"/>
<dbReference type="KEGG" id="vsa:VSAL_I2693"/>
<dbReference type="eggNOG" id="COG0344">
    <property type="taxonomic scope" value="Bacteria"/>
</dbReference>
<dbReference type="HOGENOM" id="CLU_081254_0_2_6"/>
<dbReference type="UniPathway" id="UPA00085"/>
<dbReference type="Proteomes" id="UP000001730">
    <property type="component" value="Chromosome 1"/>
</dbReference>
<dbReference type="GO" id="GO:0005886">
    <property type="term" value="C:plasma membrane"/>
    <property type="evidence" value="ECO:0007669"/>
    <property type="project" value="UniProtKB-SubCell"/>
</dbReference>
<dbReference type="GO" id="GO:0043772">
    <property type="term" value="F:acyl-phosphate glycerol-3-phosphate acyltransferase activity"/>
    <property type="evidence" value="ECO:0007669"/>
    <property type="project" value="UniProtKB-UniRule"/>
</dbReference>
<dbReference type="GO" id="GO:0008654">
    <property type="term" value="P:phospholipid biosynthetic process"/>
    <property type="evidence" value="ECO:0007669"/>
    <property type="project" value="UniProtKB-UniRule"/>
</dbReference>
<dbReference type="HAMAP" id="MF_01043">
    <property type="entry name" value="PlsY"/>
    <property type="match status" value="1"/>
</dbReference>
<dbReference type="InterPro" id="IPR003811">
    <property type="entry name" value="G3P_acylTferase_PlsY"/>
</dbReference>
<dbReference type="NCBIfam" id="TIGR00023">
    <property type="entry name" value="glycerol-3-phosphate 1-O-acyltransferase PlsY"/>
    <property type="match status" value="1"/>
</dbReference>
<dbReference type="PANTHER" id="PTHR30309:SF0">
    <property type="entry name" value="GLYCEROL-3-PHOSPHATE ACYLTRANSFERASE-RELATED"/>
    <property type="match status" value="1"/>
</dbReference>
<dbReference type="PANTHER" id="PTHR30309">
    <property type="entry name" value="INNER MEMBRANE PROTEIN YGIH"/>
    <property type="match status" value="1"/>
</dbReference>
<dbReference type="Pfam" id="PF02660">
    <property type="entry name" value="G3P_acyltransf"/>
    <property type="match status" value="1"/>
</dbReference>
<dbReference type="SMART" id="SM01207">
    <property type="entry name" value="G3P_acyltransf"/>
    <property type="match status" value="1"/>
</dbReference>